<sequence length="54" mass="6406">MAATDVRPKITLACVECKERNYITKKNRRNNPDRLEMKKHCPRCNAHTAHRETR</sequence>
<protein>
    <recommendedName>
        <fullName evidence="1">Large ribosomal subunit protein bL33B</fullName>
    </recommendedName>
    <alternativeName>
        <fullName>50S ribosomal protein L33 2</fullName>
    </alternativeName>
</protein>
<name>RL332_STRCO</name>
<evidence type="ECO:0000255" key="1">
    <source>
        <dbReference type="HAMAP-Rule" id="MF_00294"/>
    </source>
</evidence>
<evidence type="ECO:0000305" key="2"/>
<comment type="similarity">
    <text evidence="2">Belongs to the bacterial ribosomal protein bL33 family.</text>
</comment>
<feature type="chain" id="PRO_0000170242" description="Large ribosomal subunit protein bL33B">
    <location>
        <begin position="1"/>
        <end position="54"/>
    </location>
</feature>
<reference key="1">
    <citation type="journal article" date="2002" name="Nature">
        <title>Complete genome sequence of the model actinomycete Streptomyces coelicolor A3(2).</title>
        <authorList>
            <person name="Bentley S.D."/>
            <person name="Chater K.F."/>
            <person name="Cerdeno-Tarraga A.-M."/>
            <person name="Challis G.L."/>
            <person name="Thomson N.R."/>
            <person name="James K.D."/>
            <person name="Harris D.E."/>
            <person name="Quail M.A."/>
            <person name="Kieser H."/>
            <person name="Harper D."/>
            <person name="Bateman A."/>
            <person name="Brown S."/>
            <person name="Chandra G."/>
            <person name="Chen C.W."/>
            <person name="Collins M."/>
            <person name="Cronin A."/>
            <person name="Fraser A."/>
            <person name="Goble A."/>
            <person name="Hidalgo J."/>
            <person name="Hornsby T."/>
            <person name="Howarth S."/>
            <person name="Huang C.-H."/>
            <person name="Kieser T."/>
            <person name="Larke L."/>
            <person name="Murphy L.D."/>
            <person name="Oliver K."/>
            <person name="O'Neil S."/>
            <person name="Rabbinowitsch E."/>
            <person name="Rajandream M.A."/>
            <person name="Rutherford K.M."/>
            <person name="Rutter S."/>
            <person name="Seeger K."/>
            <person name="Saunders D."/>
            <person name="Sharp S."/>
            <person name="Squares R."/>
            <person name="Squares S."/>
            <person name="Taylor K."/>
            <person name="Warren T."/>
            <person name="Wietzorrek A."/>
            <person name="Woodward J.R."/>
            <person name="Barrell B.G."/>
            <person name="Parkhill J."/>
            <person name="Hopwood D.A."/>
        </authorList>
    </citation>
    <scope>NUCLEOTIDE SEQUENCE [LARGE SCALE GENOMIC DNA]</scope>
    <source>
        <strain>ATCC BAA-471 / A3(2) / M145</strain>
    </source>
</reference>
<proteinExistence type="inferred from homology"/>
<keyword id="KW-1185">Reference proteome</keyword>
<keyword id="KW-0687">Ribonucleoprotein</keyword>
<keyword id="KW-0689">Ribosomal protein</keyword>
<gene>
    <name type="primary">rpmG2</name>
    <name type="ordered locus">SCO4635</name>
    <name type="ORF">SCD82.06</name>
</gene>
<accession>P66233</accession>
<accession>Q9L0M5</accession>
<organism>
    <name type="scientific">Streptomyces coelicolor (strain ATCC BAA-471 / A3(2) / M145)</name>
    <dbReference type="NCBI Taxonomy" id="100226"/>
    <lineage>
        <taxon>Bacteria</taxon>
        <taxon>Bacillati</taxon>
        <taxon>Actinomycetota</taxon>
        <taxon>Actinomycetes</taxon>
        <taxon>Kitasatosporales</taxon>
        <taxon>Streptomycetaceae</taxon>
        <taxon>Streptomyces</taxon>
        <taxon>Streptomyces albidoflavus group</taxon>
    </lineage>
</organism>
<dbReference type="EMBL" id="AL939120">
    <property type="protein sequence ID" value="CAB77409.1"/>
    <property type="molecule type" value="Genomic_DNA"/>
</dbReference>
<dbReference type="RefSeq" id="NP_628796.1">
    <property type="nucleotide sequence ID" value="NC_003888.3"/>
</dbReference>
<dbReference type="SMR" id="P66233"/>
<dbReference type="FunCoup" id="P66233">
    <property type="interactions" value="69"/>
</dbReference>
<dbReference type="STRING" id="100226.gene:17762283"/>
<dbReference type="PaxDb" id="100226-SCO4635"/>
<dbReference type="KEGG" id="sco:SCO4635"/>
<dbReference type="PATRIC" id="fig|100226.15.peg.4706"/>
<dbReference type="eggNOG" id="COG0267">
    <property type="taxonomic scope" value="Bacteria"/>
</dbReference>
<dbReference type="HOGENOM" id="CLU_190949_0_2_11"/>
<dbReference type="InParanoid" id="P66233"/>
<dbReference type="OrthoDB" id="21586at2"/>
<dbReference type="PhylomeDB" id="P66233"/>
<dbReference type="PRO" id="PR:P66233"/>
<dbReference type="Proteomes" id="UP000001973">
    <property type="component" value="Chromosome"/>
</dbReference>
<dbReference type="GO" id="GO:0005737">
    <property type="term" value="C:cytoplasm"/>
    <property type="evidence" value="ECO:0007669"/>
    <property type="project" value="UniProtKB-ARBA"/>
</dbReference>
<dbReference type="GO" id="GO:1990904">
    <property type="term" value="C:ribonucleoprotein complex"/>
    <property type="evidence" value="ECO:0007669"/>
    <property type="project" value="UniProtKB-KW"/>
</dbReference>
<dbReference type="GO" id="GO:0005840">
    <property type="term" value="C:ribosome"/>
    <property type="evidence" value="ECO:0007669"/>
    <property type="project" value="UniProtKB-KW"/>
</dbReference>
<dbReference type="GO" id="GO:0003735">
    <property type="term" value="F:structural constituent of ribosome"/>
    <property type="evidence" value="ECO:0007669"/>
    <property type="project" value="InterPro"/>
</dbReference>
<dbReference type="GO" id="GO:0006412">
    <property type="term" value="P:translation"/>
    <property type="evidence" value="ECO:0007669"/>
    <property type="project" value="UniProtKB-UniRule"/>
</dbReference>
<dbReference type="Gene3D" id="2.20.28.120">
    <property type="entry name" value="Ribosomal protein L33"/>
    <property type="match status" value="1"/>
</dbReference>
<dbReference type="HAMAP" id="MF_00294">
    <property type="entry name" value="Ribosomal_bL33"/>
    <property type="match status" value="1"/>
</dbReference>
<dbReference type="InterPro" id="IPR001705">
    <property type="entry name" value="Ribosomal_bL33"/>
</dbReference>
<dbReference type="InterPro" id="IPR018264">
    <property type="entry name" value="Ribosomal_bL33_CS"/>
</dbReference>
<dbReference type="InterPro" id="IPR038584">
    <property type="entry name" value="Ribosomal_bL33_sf"/>
</dbReference>
<dbReference type="InterPro" id="IPR011332">
    <property type="entry name" value="Ribosomal_zn-bd"/>
</dbReference>
<dbReference type="NCBIfam" id="NF001764">
    <property type="entry name" value="PRK00504.1"/>
    <property type="match status" value="1"/>
</dbReference>
<dbReference type="NCBIfam" id="NF001860">
    <property type="entry name" value="PRK00595.1"/>
    <property type="match status" value="1"/>
</dbReference>
<dbReference type="NCBIfam" id="TIGR01023">
    <property type="entry name" value="rpmG_bact"/>
    <property type="match status" value="1"/>
</dbReference>
<dbReference type="PANTHER" id="PTHR43168">
    <property type="entry name" value="50S RIBOSOMAL PROTEIN L33, CHLOROPLASTIC"/>
    <property type="match status" value="1"/>
</dbReference>
<dbReference type="PANTHER" id="PTHR43168:SF2">
    <property type="entry name" value="LARGE RIBOSOMAL SUBUNIT PROTEIN BL33C"/>
    <property type="match status" value="1"/>
</dbReference>
<dbReference type="Pfam" id="PF00471">
    <property type="entry name" value="Ribosomal_L33"/>
    <property type="match status" value="1"/>
</dbReference>
<dbReference type="SUPFAM" id="SSF57829">
    <property type="entry name" value="Zn-binding ribosomal proteins"/>
    <property type="match status" value="1"/>
</dbReference>
<dbReference type="PROSITE" id="PS00582">
    <property type="entry name" value="RIBOSOMAL_L33"/>
    <property type="match status" value="1"/>
</dbReference>